<protein>
    <recommendedName>
        <fullName>Glandular kallikrein, prostatic</fullName>
        <ecNumber>3.4.21.35</ecNumber>
    </recommendedName>
    <alternativeName>
        <fullName>Prostate esterase</fullName>
    </alternativeName>
    <alternativeName>
        <fullName>Tissue kallikrein</fullName>
    </alternativeName>
</protein>
<comment type="function">
    <text>Glandular kallikreins cleave Met-Lys and Arg-Ser bonds in kininogen to release Lys-bradykinin.</text>
</comment>
<comment type="catalytic activity">
    <reaction>
        <text>Preferential cleavage of Arg-|-Xaa bonds in small molecule substrates. Highly selective action to release kallidin (lysyl-bradykinin) from kininogen involves hydrolysis of Met-|-Xaa or Leu-|-Xaa.</text>
        <dbReference type="EC" id="3.4.21.35"/>
    </reaction>
</comment>
<comment type="similarity">
    <text evidence="1">Belongs to the peptidase S1 family. Kallikrein subfamily.</text>
</comment>
<organism>
    <name type="scientific">Cavia porcellus</name>
    <name type="common">Guinea pig</name>
    <dbReference type="NCBI Taxonomy" id="10141"/>
    <lineage>
        <taxon>Eukaryota</taxon>
        <taxon>Metazoa</taxon>
        <taxon>Chordata</taxon>
        <taxon>Craniata</taxon>
        <taxon>Vertebrata</taxon>
        <taxon>Euteleostomi</taxon>
        <taxon>Mammalia</taxon>
        <taxon>Eutheria</taxon>
        <taxon>Euarchontoglires</taxon>
        <taxon>Glires</taxon>
        <taxon>Rodentia</taxon>
        <taxon>Hystricomorpha</taxon>
        <taxon>Caviidae</taxon>
        <taxon>Cavia</taxon>
    </lineage>
</organism>
<feature type="chain" id="PRO_0000088701" description="Glandular kallikrein, prostatic">
    <location>
        <begin position="1"/>
        <end position="239"/>
    </location>
</feature>
<feature type="domain" description="Peptidase S1" evidence="1">
    <location>
        <begin position="1"/>
        <end position="236"/>
    </location>
</feature>
<feature type="active site" description="Charge relay system">
    <location>
        <position position="41"/>
    </location>
</feature>
<feature type="active site" description="Charge relay system">
    <location>
        <position position="96"/>
    </location>
</feature>
<feature type="active site" description="Charge relay system">
    <location>
        <position position="191"/>
    </location>
</feature>
<feature type="glycosylation site" description="N-linked (GlcNAc...) asparagine">
    <location>
        <position position="78"/>
    </location>
</feature>
<feature type="glycosylation site" description="N-linked (GlcNAc...) asparagine">
    <location>
        <position position="169"/>
    </location>
</feature>
<feature type="disulfide bond" evidence="1">
    <location>
        <begin position="7"/>
        <end position="151"/>
    </location>
</feature>
<feature type="disulfide bond" evidence="1">
    <location>
        <begin position="26"/>
        <end position="42"/>
    </location>
</feature>
<feature type="disulfide bond" evidence="1">
    <location>
        <begin position="128"/>
        <end position="197"/>
    </location>
</feature>
<feature type="disulfide bond" evidence="1">
    <location>
        <begin position="162"/>
        <end position="176"/>
    </location>
</feature>
<feature type="disulfide bond" evidence="1">
    <location>
        <begin position="187"/>
        <end position="212"/>
    </location>
</feature>
<feature type="sequence variant">
    <original>K</original>
    <variation>W</variation>
    <location>
        <position position="50"/>
    </location>
</feature>
<reference key="1">
    <citation type="journal article" date="1987" name="Biochemistry">
        <title>Amino acid sequence of guinea pig prostate kallikrein.</title>
        <authorList>
            <person name="Dunbar J.C."/>
            <person name="Bradshaw R.A."/>
        </authorList>
    </citation>
    <scope>PROTEIN SEQUENCE</scope>
</reference>
<name>KLK2_CAVPO</name>
<sequence>VIGGQECARDSHPWQAAVYYYSDIKCGGVLVDPQWVLTAAHCINDSNQVKLGRHNLFEDEDTAQHFLVSQSVPHPDFNMSLLEPHNVLPNEDYSHDLMLLRLNQPAQITDSVQVMPLPTQEVQVGTTCRALGWGSIDPDPAHPVFPDELQCVGLEILPSKNCDDAHIANVTGTMLCAGDLAGGKDTCVGDSGGPLICDGVLQGLTSWGDSPCGVAHSPSLYTKVIEYREWIERTMADNP</sequence>
<evidence type="ECO:0000255" key="1">
    <source>
        <dbReference type="PROSITE-ProRule" id="PRU00274"/>
    </source>
</evidence>
<keyword id="KW-0903">Direct protein sequencing</keyword>
<keyword id="KW-1015">Disulfide bond</keyword>
<keyword id="KW-0325">Glycoprotein</keyword>
<keyword id="KW-0378">Hydrolase</keyword>
<keyword id="KW-0645">Protease</keyword>
<keyword id="KW-1185">Reference proteome</keyword>
<keyword id="KW-0720">Serine protease</keyword>
<proteinExistence type="evidence at protein level"/>
<dbReference type="EC" id="3.4.21.35"/>
<dbReference type="PIR" id="A27207">
    <property type="entry name" value="A27207"/>
</dbReference>
<dbReference type="SMR" id="P12323"/>
<dbReference type="FunCoup" id="P12323">
    <property type="interactions" value="1080"/>
</dbReference>
<dbReference type="STRING" id="10141.ENSCPOP00000005082"/>
<dbReference type="eggNOG" id="KOG3627">
    <property type="taxonomic scope" value="Eukaryota"/>
</dbReference>
<dbReference type="InParanoid" id="P12323"/>
<dbReference type="Proteomes" id="UP000005447">
    <property type="component" value="Unassembled WGS sequence"/>
</dbReference>
<dbReference type="GO" id="GO:0030141">
    <property type="term" value="C:secretory granule"/>
    <property type="evidence" value="ECO:0007669"/>
    <property type="project" value="TreeGrafter"/>
</dbReference>
<dbReference type="GO" id="GO:0004252">
    <property type="term" value="F:serine-type endopeptidase activity"/>
    <property type="evidence" value="ECO:0007669"/>
    <property type="project" value="UniProtKB-EC"/>
</dbReference>
<dbReference type="GO" id="GO:0003073">
    <property type="term" value="P:regulation of systemic arterial blood pressure"/>
    <property type="evidence" value="ECO:0007669"/>
    <property type="project" value="TreeGrafter"/>
</dbReference>
<dbReference type="GO" id="GO:0031638">
    <property type="term" value="P:zymogen activation"/>
    <property type="evidence" value="ECO:0007669"/>
    <property type="project" value="TreeGrafter"/>
</dbReference>
<dbReference type="CDD" id="cd00190">
    <property type="entry name" value="Tryp_SPc"/>
    <property type="match status" value="1"/>
</dbReference>
<dbReference type="FunFam" id="2.40.10.10:FF:000021">
    <property type="entry name" value="Kallikrein 1"/>
    <property type="match status" value="1"/>
</dbReference>
<dbReference type="FunFam" id="2.40.10.10:FF:000010">
    <property type="entry name" value="Kallikrein related peptidase 11"/>
    <property type="match status" value="1"/>
</dbReference>
<dbReference type="Gene3D" id="2.40.10.10">
    <property type="entry name" value="Trypsin-like serine proteases"/>
    <property type="match status" value="2"/>
</dbReference>
<dbReference type="InterPro" id="IPR009003">
    <property type="entry name" value="Peptidase_S1_PA"/>
</dbReference>
<dbReference type="InterPro" id="IPR043504">
    <property type="entry name" value="Peptidase_S1_PA_chymotrypsin"/>
</dbReference>
<dbReference type="InterPro" id="IPR001314">
    <property type="entry name" value="Peptidase_S1A"/>
</dbReference>
<dbReference type="InterPro" id="IPR001254">
    <property type="entry name" value="Trypsin_dom"/>
</dbReference>
<dbReference type="InterPro" id="IPR018114">
    <property type="entry name" value="TRYPSIN_HIS"/>
</dbReference>
<dbReference type="InterPro" id="IPR033116">
    <property type="entry name" value="TRYPSIN_SER"/>
</dbReference>
<dbReference type="PANTHER" id="PTHR24271:SF47">
    <property type="entry name" value="KALLIKREIN-1"/>
    <property type="match status" value="1"/>
</dbReference>
<dbReference type="PANTHER" id="PTHR24271">
    <property type="entry name" value="KALLIKREIN-RELATED"/>
    <property type="match status" value="1"/>
</dbReference>
<dbReference type="Pfam" id="PF00089">
    <property type="entry name" value="Trypsin"/>
    <property type="match status" value="1"/>
</dbReference>
<dbReference type="PRINTS" id="PR00722">
    <property type="entry name" value="CHYMOTRYPSIN"/>
</dbReference>
<dbReference type="SMART" id="SM00020">
    <property type="entry name" value="Tryp_SPc"/>
    <property type="match status" value="1"/>
</dbReference>
<dbReference type="SUPFAM" id="SSF50494">
    <property type="entry name" value="Trypsin-like serine proteases"/>
    <property type="match status" value="1"/>
</dbReference>
<dbReference type="PROSITE" id="PS50240">
    <property type="entry name" value="TRYPSIN_DOM"/>
    <property type="match status" value="1"/>
</dbReference>
<dbReference type="PROSITE" id="PS00134">
    <property type="entry name" value="TRYPSIN_HIS"/>
    <property type="match status" value="1"/>
</dbReference>
<dbReference type="PROSITE" id="PS00135">
    <property type="entry name" value="TRYPSIN_SER"/>
    <property type="match status" value="1"/>
</dbReference>
<accession>P12323</accession>